<sequence>MGKKNKSKINPIEELKSDCLPILELQYSDPLFQIASHPEQAIIISGLATGYVYCHRYNVTVLENYLQQQKKKFVSDADGKKSKKVKFWTVYDIINENKDNADTGSDSGVELIWKTKRHKGSVRCIALDSDGQFVYTVGTDNVLKKADVLTGKVVKKTNLKNDNGGKYTKMVKSPTHSLLILGDENGTVIVLNSETLQETNRLTKVHNGDDAINDIFHFAKRSIYRYISLGQTTLAYWDARESNESDFKLDPEDTTSKRKVMLSDDQEDEVLCGTFVDPEVGDNLVCGMGDGILTVWKPERNDLEDQLNRIKIAKEESIDCIVPTLQDDNCIWCGCSNGNIYKADIKKGKVVEVRNHSSLDEVSFLDLDYDYRVISGGMDKVKIWQSRNEVSEEEDDEESESFSDSDSDSDSDSDSDSDSDRDRDRDSDSDGDSDGDDIGNGSDVNDSGASGSENDSSDVWEGLENGSDDEPVQEKDETSGSDMDDIDEGSDSSEGELIGLSREELIAELDEDIMEESEQEGEKLQKKRKNEPSKKNTKNLKKVKPSYNDSHGIRKFEGL</sequence>
<protein>
    <recommendedName>
        <fullName>WD repeat-containing protein JIP5</fullName>
    </recommendedName>
</protein>
<proteinExistence type="inferred from homology"/>
<accession>A7TH93</accession>
<name>JIP5_VANPO</name>
<feature type="chain" id="PRO_0000333573" description="WD repeat-containing protein JIP5">
    <location>
        <begin position="1"/>
        <end position="559"/>
    </location>
</feature>
<feature type="repeat" description="WD 1">
    <location>
        <begin position="26"/>
        <end position="67"/>
    </location>
</feature>
<feature type="repeat" description="WD 2">
    <location>
        <begin position="77"/>
        <end position="116"/>
    </location>
</feature>
<feature type="repeat" description="WD 3">
    <location>
        <begin position="117"/>
        <end position="156"/>
    </location>
</feature>
<feature type="repeat" description="WD 4">
    <location>
        <begin position="162"/>
        <end position="201"/>
    </location>
</feature>
<feature type="repeat" description="WD 5">
    <location>
        <begin position="207"/>
        <end position="247"/>
    </location>
</feature>
<feature type="repeat" description="WD 6">
    <location>
        <begin position="265"/>
        <end position="306"/>
    </location>
</feature>
<feature type="repeat" description="WD 7">
    <location>
        <begin position="313"/>
        <end position="347"/>
    </location>
</feature>
<feature type="repeat" description="WD 8">
    <location>
        <begin position="354"/>
        <end position="394"/>
    </location>
</feature>
<feature type="repeat" description="WD 9">
    <location>
        <begin position="428"/>
        <end position="470"/>
    </location>
</feature>
<feature type="region of interest" description="Disordered" evidence="2">
    <location>
        <begin position="386"/>
        <end position="500"/>
    </location>
</feature>
<feature type="region of interest" description="Disordered" evidence="2">
    <location>
        <begin position="515"/>
        <end position="559"/>
    </location>
</feature>
<feature type="compositionally biased region" description="Acidic residues" evidence="2">
    <location>
        <begin position="391"/>
        <end position="417"/>
    </location>
</feature>
<feature type="compositionally biased region" description="Basic and acidic residues" evidence="2">
    <location>
        <begin position="418"/>
        <end position="428"/>
    </location>
</feature>
<feature type="compositionally biased region" description="Acidic residues" evidence="2">
    <location>
        <begin position="482"/>
        <end position="494"/>
    </location>
</feature>
<feature type="compositionally biased region" description="Basic and acidic residues" evidence="2">
    <location>
        <begin position="520"/>
        <end position="534"/>
    </location>
</feature>
<feature type="compositionally biased region" description="Basic residues" evidence="2">
    <location>
        <begin position="535"/>
        <end position="544"/>
    </location>
</feature>
<gene>
    <name type="primary">JIP5</name>
    <name type="ORF">Kpol_1013p46</name>
</gene>
<comment type="subcellular location">
    <subcellularLocation>
        <location evidence="1">Nucleus</location>
        <location evidence="1">Nucleolus</location>
    </subcellularLocation>
</comment>
<comment type="similarity">
    <text evidence="3">Belongs to the WD repeat WDR55 family.</text>
</comment>
<evidence type="ECO:0000250" key="1"/>
<evidence type="ECO:0000256" key="2">
    <source>
        <dbReference type="SAM" id="MobiDB-lite"/>
    </source>
</evidence>
<evidence type="ECO:0000305" key="3"/>
<dbReference type="EMBL" id="DS480390">
    <property type="protein sequence ID" value="EDO18374.1"/>
    <property type="molecule type" value="Genomic_DNA"/>
</dbReference>
<dbReference type="RefSeq" id="XP_001646232.1">
    <property type="nucleotide sequence ID" value="XM_001646182.1"/>
</dbReference>
<dbReference type="SMR" id="A7TH93"/>
<dbReference type="FunCoup" id="A7TH93">
    <property type="interactions" value="132"/>
</dbReference>
<dbReference type="STRING" id="436907.A7TH93"/>
<dbReference type="GeneID" id="5546658"/>
<dbReference type="KEGG" id="vpo:Kpol_1013p46"/>
<dbReference type="eggNOG" id="KOG2444">
    <property type="taxonomic scope" value="Eukaryota"/>
</dbReference>
<dbReference type="HOGENOM" id="CLU_035623_0_0_1"/>
<dbReference type="InParanoid" id="A7TH93"/>
<dbReference type="OMA" id="DDNCIWC"/>
<dbReference type="OrthoDB" id="2288928at2759"/>
<dbReference type="PhylomeDB" id="A7TH93"/>
<dbReference type="Proteomes" id="UP000000267">
    <property type="component" value="Unassembled WGS sequence"/>
</dbReference>
<dbReference type="GO" id="GO:0005730">
    <property type="term" value="C:nucleolus"/>
    <property type="evidence" value="ECO:0007669"/>
    <property type="project" value="UniProtKB-SubCell"/>
</dbReference>
<dbReference type="GO" id="GO:0045943">
    <property type="term" value="P:positive regulation of transcription by RNA polymerase I"/>
    <property type="evidence" value="ECO:0007669"/>
    <property type="project" value="TreeGrafter"/>
</dbReference>
<dbReference type="GO" id="GO:0042273">
    <property type="term" value="P:ribosomal large subunit biogenesis"/>
    <property type="evidence" value="ECO:0007669"/>
    <property type="project" value="EnsemblFungi"/>
</dbReference>
<dbReference type="GO" id="GO:0006364">
    <property type="term" value="P:rRNA processing"/>
    <property type="evidence" value="ECO:0007669"/>
    <property type="project" value="TreeGrafter"/>
</dbReference>
<dbReference type="Gene3D" id="2.130.10.10">
    <property type="entry name" value="YVTN repeat-like/Quinoprotein amine dehydrogenase"/>
    <property type="match status" value="2"/>
</dbReference>
<dbReference type="InterPro" id="IPR015943">
    <property type="entry name" value="WD40/YVTN_repeat-like_dom_sf"/>
</dbReference>
<dbReference type="InterPro" id="IPR036322">
    <property type="entry name" value="WD40_repeat_dom_sf"/>
</dbReference>
<dbReference type="InterPro" id="IPR001680">
    <property type="entry name" value="WD40_rpt"/>
</dbReference>
<dbReference type="PANTHER" id="PTHR19924">
    <property type="entry name" value="UTP15 U3 SMALL NUCLEOLAR RNA-ASSOCIATED PROTEIN 15 FAMILY MEMBER"/>
    <property type="match status" value="1"/>
</dbReference>
<dbReference type="PANTHER" id="PTHR19924:SF31">
    <property type="entry name" value="WD REPEAT-CONTAINING PROTEIN JIP5"/>
    <property type="match status" value="1"/>
</dbReference>
<dbReference type="Pfam" id="PF00400">
    <property type="entry name" value="WD40"/>
    <property type="match status" value="1"/>
</dbReference>
<dbReference type="SMART" id="SM00320">
    <property type="entry name" value="WD40"/>
    <property type="match status" value="4"/>
</dbReference>
<dbReference type="SUPFAM" id="SSF50978">
    <property type="entry name" value="WD40 repeat-like"/>
    <property type="match status" value="1"/>
</dbReference>
<keyword id="KW-0539">Nucleus</keyword>
<keyword id="KW-1185">Reference proteome</keyword>
<keyword id="KW-0677">Repeat</keyword>
<keyword id="KW-0853">WD repeat</keyword>
<reference key="1">
    <citation type="journal article" date="2007" name="Proc. Natl. Acad. Sci. U.S.A.">
        <title>Independent sorting-out of thousands of duplicated gene pairs in two yeast species descended from a whole-genome duplication.</title>
        <authorList>
            <person name="Scannell D.R."/>
            <person name="Frank A.C."/>
            <person name="Conant G.C."/>
            <person name="Byrne K.P."/>
            <person name="Woolfit M."/>
            <person name="Wolfe K.H."/>
        </authorList>
    </citation>
    <scope>NUCLEOTIDE SEQUENCE [LARGE SCALE GENOMIC DNA]</scope>
    <source>
        <strain>ATCC 22028 / DSM 70294 / BCRC 21397 / CBS 2163 / NBRC 10782 / NRRL Y-8283 / UCD 57-17</strain>
    </source>
</reference>
<organism>
    <name type="scientific">Vanderwaltozyma polyspora (strain ATCC 22028 / DSM 70294 / BCRC 21397 / CBS 2163 / NBRC 10782 / NRRL Y-8283 / UCD 57-17)</name>
    <name type="common">Kluyveromyces polysporus</name>
    <dbReference type="NCBI Taxonomy" id="436907"/>
    <lineage>
        <taxon>Eukaryota</taxon>
        <taxon>Fungi</taxon>
        <taxon>Dikarya</taxon>
        <taxon>Ascomycota</taxon>
        <taxon>Saccharomycotina</taxon>
        <taxon>Saccharomycetes</taxon>
        <taxon>Saccharomycetales</taxon>
        <taxon>Saccharomycetaceae</taxon>
        <taxon>Vanderwaltozyma</taxon>
    </lineage>
</organism>